<accession>O54947</accession>
<name>HAVR1_RAT</name>
<protein>
    <recommendedName>
        <fullName>Hepatitis A virus cellular receptor 1 homolog</fullName>
        <shortName>HAVcr-1</shortName>
    </recommendedName>
    <alternativeName>
        <fullName>Kidney injury molecule 1</fullName>
        <shortName>KIM-1</shortName>
    </alternativeName>
    <alternativeName>
        <fullName>T cell immunoglobulin and mucin domain-containing protein 1</fullName>
        <shortName>TIMD-1</shortName>
    </alternativeName>
    <cdAntigenName>CD365</cdAntigenName>
</protein>
<proteinExistence type="evidence at transcript level"/>
<gene>
    <name type="primary">Havcr1</name>
    <name type="synonym">Kim1</name>
</gene>
<feature type="signal peptide" evidence="3">
    <location>
        <begin position="1"/>
        <end position="21"/>
    </location>
</feature>
<feature type="chain" id="PRO_0000014983" description="Hepatitis A virus cellular receptor 1 homolog">
    <location>
        <begin position="22"/>
        <end position="307"/>
    </location>
</feature>
<feature type="topological domain" description="Extracellular" evidence="3">
    <location>
        <begin position="22"/>
        <end position="235"/>
    </location>
</feature>
<feature type="transmembrane region" description="Helical" evidence="3">
    <location>
        <begin position="236"/>
        <end position="256"/>
    </location>
</feature>
<feature type="topological domain" description="Cytoplasmic" evidence="3">
    <location>
        <begin position="257"/>
        <end position="307"/>
    </location>
</feature>
<feature type="domain" description="Ig-like V-type">
    <location>
        <begin position="22"/>
        <end position="124"/>
    </location>
</feature>
<feature type="region of interest" description="Disordered" evidence="5">
    <location>
        <begin position="129"/>
        <end position="177"/>
    </location>
</feature>
<feature type="compositionally biased region" description="Low complexity" evidence="5">
    <location>
        <begin position="139"/>
        <end position="175"/>
    </location>
</feature>
<feature type="glycosylation site" description="N-linked (GlcNAc...) asparagine" evidence="3">
    <location>
        <position position="206"/>
    </location>
</feature>
<feature type="disulfide bond" evidence="4">
    <location>
        <begin position="37"/>
        <end position="108"/>
    </location>
</feature>
<feature type="disulfide bond" evidence="1">
    <location>
        <begin position="49"/>
        <end position="60"/>
    </location>
</feature>
<feature type="disulfide bond" evidence="1">
    <location>
        <begin position="55"/>
        <end position="107"/>
    </location>
</feature>
<organism>
    <name type="scientific">Rattus norvegicus</name>
    <name type="common">Rat</name>
    <dbReference type="NCBI Taxonomy" id="10116"/>
    <lineage>
        <taxon>Eukaryota</taxon>
        <taxon>Metazoa</taxon>
        <taxon>Chordata</taxon>
        <taxon>Craniata</taxon>
        <taxon>Vertebrata</taxon>
        <taxon>Euteleostomi</taxon>
        <taxon>Mammalia</taxon>
        <taxon>Eutheria</taxon>
        <taxon>Euarchontoglires</taxon>
        <taxon>Glires</taxon>
        <taxon>Rodentia</taxon>
        <taxon>Myomorpha</taxon>
        <taxon>Muroidea</taxon>
        <taxon>Muridae</taxon>
        <taxon>Murinae</taxon>
        <taxon>Rattus</taxon>
    </lineage>
</organism>
<reference key="1">
    <citation type="journal article" date="1998" name="J. Biol. Chem.">
        <title>Kidney injury molecule-1 (KIM-1), a putative epithelial cell adhesion molecule containing a novel immunoglobulin domain, is up-regulated in renal cells after injury.</title>
        <authorList>
            <person name="Ichimura T."/>
            <person name="Bonventre J.V."/>
            <person name="Bailly V."/>
            <person name="Wei H."/>
            <person name="Hession C.A."/>
            <person name="Cate R.L."/>
            <person name="Sanicola M."/>
        </authorList>
    </citation>
    <scope>NUCLEOTIDE SEQUENCE [MRNA]</scope>
    <scope>TISSUE SPECIFICITY</scope>
    <source>
        <strain>Sprague-Dawley</strain>
        <tissue>Kidney</tissue>
    </source>
</reference>
<reference key="2">
    <citation type="journal article" date="2004" name="Genome Res.">
        <title>The status, quality, and expansion of the NIH full-length cDNA project: the Mammalian Gene Collection (MGC).</title>
        <authorList>
            <consortium name="The MGC Project Team"/>
        </authorList>
    </citation>
    <scope>NUCLEOTIDE SEQUENCE [LARGE SCALE MRNA]</scope>
    <source>
        <tissue>Prostate</tissue>
    </source>
</reference>
<comment type="function">
    <text evidence="1 2">Phosphatidylserine receptor that plays an important functional role in regulatory B-cells homeostasis including generation, expansion and suppressor functions (By similarity). As P-selectin/SELPLG ligand, plays a specialized role in activated but not naive T-cell trafficking during inflammatory responses. Controls thereby T-cell accumulation in the inflamed central nervous system (CNS) and the induction of autoimmune disease (By similarity). Also regulates expression of various anti-inflammatory cytokines and co-inhibitory ligands including IL10. Acts as a regulator of T-cell proliferation (By similarity). May play a role in kidney injury and repair (By similarity).</text>
</comment>
<comment type="subunit">
    <text evidence="2">Interacts with STAM. Interacts with SELPLG.</text>
</comment>
<comment type="subcellular location">
    <subcellularLocation>
        <location evidence="2">Cell membrane</location>
        <topology evidence="2">Single-pass type I membrane protein</topology>
    </subcellularLocation>
</comment>
<comment type="tissue specificity">
    <text evidence="6">Expressed at a low level in normal kidney but are increased dramatically in postischemic kidney. Expressed in proliferating bromodeoxyuridine-positive and dedifferentiated vimentin-positive epithelial cells in regenerating proximal tubules.</text>
</comment>
<comment type="similarity">
    <text evidence="7">Belongs to the immunoglobulin superfamily. TIM family.</text>
</comment>
<sequence length="307" mass="33964">MVQLQVFISGLLLLLPGSVDSYEVVKGVVGHPVTIPCTYSTRGGITTTCWGRGQCPYSSCQNILIWTNGYQVTYRSSGRYNIKGRISEGDVSLTIENSVDSDSGLYCCRVEIPGWFNDQKMTFSLEVKPEIPTSPPTRPTTTRPTTTRPTTISTRSTHVPTSTRVSTSTPTPEQTQTHKPEITTFYAHETTAEVTETPSYTPADWNGTVTSSEEAWNNHTVRIPLRKPQRNPTKGFYVGMSVAALLLLLLASTVVVTRYIIIRKKMGSLSFVAFHVSKSRALQNAAIVHPRAEDNIYIIEDRSRGAE</sequence>
<evidence type="ECO:0000250" key="1">
    <source>
        <dbReference type="UniProtKB" id="Q5QNS5"/>
    </source>
</evidence>
<evidence type="ECO:0000250" key="2">
    <source>
        <dbReference type="UniProtKB" id="Q96D42"/>
    </source>
</evidence>
<evidence type="ECO:0000255" key="3"/>
<evidence type="ECO:0000255" key="4">
    <source>
        <dbReference type="PROSITE-ProRule" id="PRU00114"/>
    </source>
</evidence>
<evidence type="ECO:0000256" key="5">
    <source>
        <dbReference type="SAM" id="MobiDB-lite"/>
    </source>
</evidence>
<evidence type="ECO:0000269" key="6">
    <source>
    </source>
</evidence>
<evidence type="ECO:0000305" key="7"/>
<dbReference type="EMBL" id="AF035963">
    <property type="protein sequence ID" value="AAC53546.1"/>
    <property type="molecule type" value="mRNA"/>
</dbReference>
<dbReference type="EMBL" id="BC061820">
    <property type="protein sequence ID" value="AAH61820.1"/>
    <property type="molecule type" value="mRNA"/>
</dbReference>
<dbReference type="RefSeq" id="NP_775172.1">
    <property type="nucleotide sequence ID" value="NM_173149.2"/>
</dbReference>
<dbReference type="SMR" id="O54947"/>
<dbReference type="FunCoup" id="O54947">
    <property type="interactions" value="400"/>
</dbReference>
<dbReference type="STRING" id="10116.ENSRNOP00000009573"/>
<dbReference type="GlyCosmos" id="O54947">
    <property type="glycosylation" value="1 site, No reported glycans"/>
</dbReference>
<dbReference type="GlyGen" id="O54947">
    <property type="glycosylation" value="2 sites"/>
</dbReference>
<dbReference type="PhosphoSitePlus" id="O54947"/>
<dbReference type="PaxDb" id="10116-ENSRNOP00000009573"/>
<dbReference type="GeneID" id="286934"/>
<dbReference type="KEGG" id="rno:286934"/>
<dbReference type="UCSC" id="RGD:708425">
    <property type="organism name" value="rat"/>
</dbReference>
<dbReference type="AGR" id="RGD:708425"/>
<dbReference type="CTD" id="26762"/>
<dbReference type="RGD" id="708425">
    <property type="gene designation" value="Havcr1"/>
</dbReference>
<dbReference type="eggNOG" id="ENOG502S454">
    <property type="taxonomic scope" value="Eukaryota"/>
</dbReference>
<dbReference type="InParanoid" id="O54947"/>
<dbReference type="OrthoDB" id="8447307at2759"/>
<dbReference type="PhylomeDB" id="O54947"/>
<dbReference type="PRO" id="PR:O54947"/>
<dbReference type="Proteomes" id="UP000002494">
    <property type="component" value="Unplaced"/>
</dbReference>
<dbReference type="GO" id="GO:0016324">
    <property type="term" value="C:apical plasma membrane"/>
    <property type="evidence" value="ECO:0000314"/>
    <property type="project" value="RGD"/>
</dbReference>
<dbReference type="GO" id="GO:0005903">
    <property type="term" value="C:brush border"/>
    <property type="evidence" value="ECO:0000266"/>
    <property type="project" value="RGD"/>
</dbReference>
<dbReference type="GO" id="GO:0009986">
    <property type="term" value="C:cell surface"/>
    <property type="evidence" value="ECO:0000314"/>
    <property type="project" value="RGD"/>
</dbReference>
<dbReference type="GO" id="GO:0005615">
    <property type="term" value="C:extracellular space"/>
    <property type="evidence" value="ECO:0000314"/>
    <property type="project" value="RGD"/>
</dbReference>
<dbReference type="GO" id="GO:0031514">
    <property type="term" value="C:motile cilium"/>
    <property type="evidence" value="ECO:0000266"/>
    <property type="project" value="RGD"/>
</dbReference>
<dbReference type="GO" id="GO:0045335">
    <property type="term" value="C:phagocytic vesicle"/>
    <property type="evidence" value="ECO:0000314"/>
    <property type="project" value="RGD"/>
</dbReference>
<dbReference type="GO" id="GO:0001786">
    <property type="term" value="F:phosphatidylserine binding"/>
    <property type="evidence" value="ECO:0000266"/>
    <property type="project" value="RGD"/>
</dbReference>
<dbReference type="GO" id="GO:0001618">
    <property type="term" value="F:virus receptor activity"/>
    <property type="evidence" value="ECO:0000266"/>
    <property type="project" value="RGD"/>
</dbReference>
<dbReference type="GO" id="GO:0006911">
    <property type="term" value="P:phagocytosis, engulfment"/>
    <property type="evidence" value="ECO:0000315"/>
    <property type="project" value="RGD"/>
</dbReference>
<dbReference type="GO" id="GO:0033005">
    <property type="term" value="P:positive regulation of mast cell activation"/>
    <property type="evidence" value="ECO:0000266"/>
    <property type="project" value="RGD"/>
</dbReference>
<dbReference type="GO" id="GO:0032496">
    <property type="term" value="P:response to lipopolysaccharide"/>
    <property type="evidence" value="ECO:0000266"/>
    <property type="project" value="RGD"/>
</dbReference>
<dbReference type="GO" id="GO:0010046">
    <property type="term" value="P:response to mycotoxin"/>
    <property type="evidence" value="ECO:0000270"/>
    <property type="project" value="RGD"/>
</dbReference>
<dbReference type="GO" id="GO:0007584">
    <property type="term" value="P:response to nutrient"/>
    <property type="evidence" value="ECO:0000270"/>
    <property type="project" value="RGD"/>
</dbReference>
<dbReference type="GO" id="GO:0033574">
    <property type="term" value="P:response to testosterone"/>
    <property type="evidence" value="ECO:0000270"/>
    <property type="project" value="RGD"/>
</dbReference>
<dbReference type="GO" id="GO:0009611">
    <property type="term" value="P:response to wounding"/>
    <property type="evidence" value="ECO:0000266"/>
    <property type="project" value="RGD"/>
</dbReference>
<dbReference type="GO" id="GO:0009410">
    <property type="term" value="P:response to xenobiotic stimulus"/>
    <property type="evidence" value="ECO:0000270"/>
    <property type="project" value="RGD"/>
</dbReference>
<dbReference type="FunFam" id="2.60.40.10:FF:000774">
    <property type="entry name" value="Hepatitis A virus cellular receptor 1"/>
    <property type="match status" value="1"/>
</dbReference>
<dbReference type="Gene3D" id="2.60.40.10">
    <property type="entry name" value="Immunoglobulins"/>
    <property type="match status" value="1"/>
</dbReference>
<dbReference type="InterPro" id="IPR007110">
    <property type="entry name" value="Ig-like_dom"/>
</dbReference>
<dbReference type="InterPro" id="IPR036179">
    <property type="entry name" value="Ig-like_dom_sf"/>
</dbReference>
<dbReference type="InterPro" id="IPR013783">
    <property type="entry name" value="Ig-like_fold"/>
</dbReference>
<dbReference type="InterPro" id="IPR003599">
    <property type="entry name" value="Ig_sub"/>
</dbReference>
<dbReference type="InterPro" id="IPR013106">
    <property type="entry name" value="Ig_V-set"/>
</dbReference>
<dbReference type="InterPro" id="IPR052331">
    <property type="entry name" value="TIM_domain-containing_protein"/>
</dbReference>
<dbReference type="PANTHER" id="PTHR47009">
    <property type="entry name" value="HEPATITIS A VIRUS CELLULAR RECEPTOR 1 HOMOLOG"/>
    <property type="match status" value="1"/>
</dbReference>
<dbReference type="PANTHER" id="PTHR47009:SF8">
    <property type="entry name" value="HEPATITIS A VIRUS CELLULAR RECEPTOR 1 HOMOLOG"/>
    <property type="match status" value="1"/>
</dbReference>
<dbReference type="Pfam" id="PF07686">
    <property type="entry name" value="V-set"/>
    <property type="match status" value="1"/>
</dbReference>
<dbReference type="SMART" id="SM00409">
    <property type="entry name" value="IG"/>
    <property type="match status" value="1"/>
</dbReference>
<dbReference type="SUPFAM" id="SSF48726">
    <property type="entry name" value="Immunoglobulin"/>
    <property type="match status" value="1"/>
</dbReference>
<dbReference type="PROSITE" id="PS50835">
    <property type="entry name" value="IG_LIKE"/>
    <property type="match status" value="1"/>
</dbReference>
<keyword id="KW-1003">Cell membrane</keyword>
<keyword id="KW-1015">Disulfide bond</keyword>
<keyword id="KW-0325">Glycoprotein</keyword>
<keyword id="KW-0393">Immunoglobulin domain</keyword>
<keyword id="KW-0472">Membrane</keyword>
<keyword id="KW-1185">Reference proteome</keyword>
<keyword id="KW-0732">Signal</keyword>
<keyword id="KW-0812">Transmembrane</keyword>
<keyword id="KW-1133">Transmembrane helix</keyword>